<organism>
    <name type="scientific">Escherichia coli O17:K52:H18 (strain UMN026 / ExPEC)</name>
    <dbReference type="NCBI Taxonomy" id="585056"/>
    <lineage>
        <taxon>Bacteria</taxon>
        <taxon>Pseudomonadati</taxon>
        <taxon>Pseudomonadota</taxon>
        <taxon>Gammaproteobacteria</taxon>
        <taxon>Enterobacterales</taxon>
        <taxon>Enterobacteriaceae</taxon>
        <taxon>Escherichia</taxon>
    </lineage>
</organism>
<accession>B7N5V2</accession>
<feature type="chain" id="PRO_1000185942" description="Fatty acid oxidation complex subunit alpha">
    <location>
        <begin position="1"/>
        <end position="714"/>
    </location>
</feature>
<feature type="region of interest" description="Enoyl-CoA hydratase" evidence="1">
    <location>
        <begin position="1"/>
        <end position="190"/>
    </location>
</feature>
<feature type="region of interest" description="3-hydroxyacyl-CoA dehydrogenase" evidence="1">
    <location>
        <begin position="306"/>
        <end position="714"/>
    </location>
</feature>
<feature type="site" description="Important for catalytic activity" evidence="1">
    <location>
        <position position="118"/>
    </location>
</feature>
<feature type="site" description="Important for catalytic activity" evidence="1">
    <location>
        <position position="140"/>
    </location>
</feature>
<proteinExistence type="inferred from homology"/>
<dbReference type="EC" id="4.2.1.17" evidence="1"/>
<dbReference type="EC" id="5.1.2.3" evidence="1"/>
<dbReference type="EC" id="1.1.1.35" evidence="1"/>
<dbReference type="EMBL" id="CU928163">
    <property type="protein sequence ID" value="CAR13861.1"/>
    <property type="molecule type" value="Genomic_DNA"/>
</dbReference>
<dbReference type="RefSeq" id="WP_000425046.1">
    <property type="nucleotide sequence ID" value="NC_011751.1"/>
</dbReference>
<dbReference type="RefSeq" id="YP_002413389.1">
    <property type="nucleotide sequence ID" value="NC_011751.1"/>
</dbReference>
<dbReference type="SMR" id="B7N5V2"/>
<dbReference type="STRING" id="585056.ECUMN_2680"/>
<dbReference type="KEGG" id="eum:ECUMN_2680"/>
<dbReference type="PATRIC" id="fig|585056.7.peg.2863"/>
<dbReference type="HOGENOM" id="CLU_009834_16_1_6"/>
<dbReference type="UniPathway" id="UPA00659"/>
<dbReference type="Proteomes" id="UP000007097">
    <property type="component" value="Chromosome"/>
</dbReference>
<dbReference type="GO" id="GO:0005737">
    <property type="term" value="C:cytoplasm"/>
    <property type="evidence" value="ECO:0007669"/>
    <property type="project" value="UniProtKB-SubCell"/>
</dbReference>
<dbReference type="GO" id="GO:0008692">
    <property type="term" value="F:3-hydroxybutyryl-CoA epimerase activity"/>
    <property type="evidence" value="ECO:0007669"/>
    <property type="project" value="UniProtKB-UniRule"/>
</dbReference>
<dbReference type="GO" id="GO:0004300">
    <property type="term" value="F:enoyl-CoA hydratase activity"/>
    <property type="evidence" value="ECO:0007669"/>
    <property type="project" value="UniProtKB-UniRule"/>
</dbReference>
<dbReference type="GO" id="GO:0016509">
    <property type="term" value="F:long-chain-3-hydroxyacyl-CoA dehydrogenase activity"/>
    <property type="evidence" value="ECO:0007669"/>
    <property type="project" value="TreeGrafter"/>
</dbReference>
<dbReference type="GO" id="GO:0070403">
    <property type="term" value="F:NAD+ binding"/>
    <property type="evidence" value="ECO:0007669"/>
    <property type="project" value="InterPro"/>
</dbReference>
<dbReference type="GO" id="GO:0006635">
    <property type="term" value="P:fatty acid beta-oxidation"/>
    <property type="evidence" value="ECO:0007669"/>
    <property type="project" value="UniProtKB-UniRule"/>
</dbReference>
<dbReference type="CDD" id="cd06558">
    <property type="entry name" value="crotonase-like"/>
    <property type="match status" value="1"/>
</dbReference>
<dbReference type="FunFam" id="1.10.1040.50:FF:000003">
    <property type="entry name" value="Fatty acid oxidation complex subunit alpha"/>
    <property type="match status" value="1"/>
</dbReference>
<dbReference type="FunFam" id="3.90.226.10:FF:000011">
    <property type="entry name" value="Fatty acid oxidation complex subunit alpha"/>
    <property type="match status" value="1"/>
</dbReference>
<dbReference type="FunFam" id="3.40.50.720:FF:000009">
    <property type="entry name" value="Fatty oxidation complex, alpha subunit"/>
    <property type="match status" value="1"/>
</dbReference>
<dbReference type="Gene3D" id="1.10.1040.50">
    <property type="match status" value="1"/>
</dbReference>
<dbReference type="Gene3D" id="3.90.226.10">
    <property type="entry name" value="2-enoyl-CoA Hydratase, Chain A, domain 1"/>
    <property type="match status" value="1"/>
</dbReference>
<dbReference type="Gene3D" id="3.40.50.720">
    <property type="entry name" value="NAD(P)-binding Rossmann-like Domain"/>
    <property type="match status" value="1"/>
</dbReference>
<dbReference type="HAMAP" id="MF_01617">
    <property type="entry name" value="FadJ"/>
    <property type="match status" value="1"/>
</dbReference>
<dbReference type="InterPro" id="IPR006180">
    <property type="entry name" value="3-OHacyl-CoA_DH_CS"/>
</dbReference>
<dbReference type="InterPro" id="IPR006176">
    <property type="entry name" value="3-OHacyl-CoA_DH_NAD-bd"/>
</dbReference>
<dbReference type="InterPro" id="IPR006108">
    <property type="entry name" value="3HC_DH_C"/>
</dbReference>
<dbReference type="InterPro" id="IPR008927">
    <property type="entry name" value="6-PGluconate_DH-like_C_sf"/>
</dbReference>
<dbReference type="InterPro" id="IPR029045">
    <property type="entry name" value="ClpP/crotonase-like_dom_sf"/>
</dbReference>
<dbReference type="InterPro" id="IPR001753">
    <property type="entry name" value="Enoyl-CoA_hydra/iso"/>
</dbReference>
<dbReference type="InterPro" id="IPR050136">
    <property type="entry name" value="FA_oxidation_alpha_subunit"/>
</dbReference>
<dbReference type="InterPro" id="IPR012802">
    <property type="entry name" value="FadJ"/>
</dbReference>
<dbReference type="InterPro" id="IPR036291">
    <property type="entry name" value="NAD(P)-bd_dom_sf"/>
</dbReference>
<dbReference type="NCBIfam" id="TIGR02440">
    <property type="entry name" value="FadJ"/>
    <property type="match status" value="1"/>
</dbReference>
<dbReference type="NCBIfam" id="NF008363">
    <property type="entry name" value="PRK11154.1"/>
    <property type="match status" value="1"/>
</dbReference>
<dbReference type="PANTHER" id="PTHR43612">
    <property type="entry name" value="TRIFUNCTIONAL ENZYME SUBUNIT ALPHA"/>
    <property type="match status" value="1"/>
</dbReference>
<dbReference type="PANTHER" id="PTHR43612:SF3">
    <property type="entry name" value="TRIFUNCTIONAL ENZYME SUBUNIT ALPHA, MITOCHONDRIAL"/>
    <property type="match status" value="1"/>
</dbReference>
<dbReference type="Pfam" id="PF00725">
    <property type="entry name" value="3HCDH"/>
    <property type="match status" value="2"/>
</dbReference>
<dbReference type="Pfam" id="PF02737">
    <property type="entry name" value="3HCDH_N"/>
    <property type="match status" value="1"/>
</dbReference>
<dbReference type="Pfam" id="PF00378">
    <property type="entry name" value="ECH_1"/>
    <property type="match status" value="1"/>
</dbReference>
<dbReference type="SUPFAM" id="SSF48179">
    <property type="entry name" value="6-phosphogluconate dehydrogenase C-terminal domain-like"/>
    <property type="match status" value="2"/>
</dbReference>
<dbReference type="SUPFAM" id="SSF52096">
    <property type="entry name" value="ClpP/crotonase"/>
    <property type="match status" value="1"/>
</dbReference>
<dbReference type="SUPFAM" id="SSF51735">
    <property type="entry name" value="NAD(P)-binding Rossmann-fold domains"/>
    <property type="match status" value="1"/>
</dbReference>
<dbReference type="PROSITE" id="PS00067">
    <property type="entry name" value="3HCDH"/>
    <property type="match status" value="1"/>
</dbReference>
<keyword id="KW-0963">Cytoplasm</keyword>
<keyword id="KW-0276">Fatty acid metabolism</keyword>
<keyword id="KW-0413">Isomerase</keyword>
<keyword id="KW-0442">Lipid degradation</keyword>
<keyword id="KW-0443">Lipid metabolism</keyword>
<keyword id="KW-0456">Lyase</keyword>
<keyword id="KW-0511">Multifunctional enzyme</keyword>
<keyword id="KW-0520">NAD</keyword>
<keyword id="KW-0560">Oxidoreductase</keyword>
<comment type="function">
    <text evidence="1">Catalyzes the formation of a hydroxyacyl-CoA by addition of water on enoyl-CoA. Also exhibits 3-hydroxyacyl-CoA epimerase and 3-hydroxyacyl-CoA dehydrogenase activities.</text>
</comment>
<comment type="catalytic activity">
    <reaction evidence="1">
        <text>a (3S)-3-hydroxyacyl-CoA = a (2E)-enoyl-CoA + H2O</text>
        <dbReference type="Rhea" id="RHEA:16105"/>
        <dbReference type="ChEBI" id="CHEBI:15377"/>
        <dbReference type="ChEBI" id="CHEBI:57318"/>
        <dbReference type="ChEBI" id="CHEBI:58856"/>
        <dbReference type="EC" id="4.2.1.17"/>
    </reaction>
</comment>
<comment type="catalytic activity">
    <reaction evidence="1">
        <text>a 4-saturated-(3S)-3-hydroxyacyl-CoA = a (3E)-enoyl-CoA + H2O</text>
        <dbReference type="Rhea" id="RHEA:20724"/>
        <dbReference type="ChEBI" id="CHEBI:15377"/>
        <dbReference type="ChEBI" id="CHEBI:58521"/>
        <dbReference type="ChEBI" id="CHEBI:137480"/>
        <dbReference type="EC" id="4.2.1.17"/>
    </reaction>
</comment>
<comment type="catalytic activity">
    <reaction evidence="1">
        <text>a (3S)-3-hydroxyacyl-CoA + NAD(+) = a 3-oxoacyl-CoA + NADH + H(+)</text>
        <dbReference type="Rhea" id="RHEA:22432"/>
        <dbReference type="ChEBI" id="CHEBI:15378"/>
        <dbReference type="ChEBI" id="CHEBI:57318"/>
        <dbReference type="ChEBI" id="CHEBI:57540"/>
        <dbReference type="ChEBI" id="CHEBI:57945"/>
        <dbReference type="ChEBI" id="CHEBI:90726"/>
        <dbReference type="EC" id="1.1.1.35"/>
    </reaction>
</comment>
<comment type="catalytic activity">
    <reaction evidence="1">
        <text>(3S)-3-hydroxybutanoyl-CoA = (3R)-3-hydroxybutanoyl-CoA</text>
        <dbReference type="Rhea" id="RHEA:21760"/>
        <dbReference type="ChEBI" id="CHEBI:57315"/>
        <dbReference type="ChEBI" id="CHEBI:57316"/>
        <dbReference type="EC" id="5.1.2.3"/>
    </reaction>
</comment>
<comment type="pathway">
    <text evidence="1">Lipid metabolism; fatty acid beta-oxidation.</text>
</comment>
<comment type="subunit">
    <text evidence="1">Heterotetramer of two alpha chains (FadJ) and two beta chains (FadI).</text>
</comment>
<comment type="subcellular location">
    <subcellularLocation>
        <location evidence="1">Cytoplasm</location>
    </subcellularLocation>
</comment>
<comment type="similarity">
    <text evidence="1">In the N-terminal section; belongs to the enoyl-CoA hydratase/isomerase family.</text>
</comment>
<comment type="similarity">
    <text evidence="1">In the central section; belongs to the 3-hydroxyacyl-CoA dehydrogenase family.</text>
</comment>
<evidence type="ECO:0000255" key="1">
    <source>
        <dbReference type="HAMAP-Rule" id="MF_01617"/>
    </source>
</evidence>
<gene>
    <name evidence="1" type="primary">fadJ</name>
    <name type="ordered locus">ECUMN_2680</name>
</gene>
<sequence>MEMASAFTLNVRLDNIAVITIDVPGEKMNTLKAEFASQVRAIIKQLRENKELRGVVFVSAKPDNFIAGADINMIGNCKTAQEAEALARQGQQLMAEIHALPVPVIAAIHGACLGGGLELALACHGRMCTDDPKTVLGLPEVQLGLLPGSGGTQRLPRLIGVSTALEMILTGKQLRAKQALKLGLVDDVVPQSILLEAAVELAKQDRPSSRPLPVRERILAGPLGRALLFKMVGKKTEHKTQGNYPATERILEVVETGLAQGTSSGYDAEARAFGELAMTPQSQALRSIFFASTEVKKDPGSDAPPAPLNSVGILGGGLMGGGIAYVTACKAGLPVRIKDINPQGINHALKYSWDQLEGKVRRRHLKASERDRQLALISGTTDYRGFAHRDLIIEAVFENLELKQQMVAEVEQNCAAHTIFASNTSSLPIGDIAAHATRPEQVIGLHFFSPVEKMPLVEIIPHAGTSAQTIATTVKLAKKQGKTPIVVRDKAGFYVNRILAPYINEAIRMLTEGERVEHIDAALVKFGFPVGPIQLLDEVGIDTGTKIIPVLEAAYGERFSAPANVVSSILNDDRKGRKNGRGFYLYGQKGRKSKKQVDPAIYPLIGTQGQGRLSAPQVAERCVMLMLNEAVRCLDEQVIRSVRDGDIGAVFGIGFPPFLGGPFRYIDSLGAGEVVAIMQRLATQYGSRFTPCERLVEMSKRGESFWKTTATDLQ</sequence>
<name>FADJ_ECOLU</name>
<protein>
    <recommendedName>
        <fullName evidence="1">Fatty acid oxidation complex subunit alpha</fullName>
    </recommendedName>
    <domain>
        <recommendedName>
            <fullName evidence="1">Enoyl-CoA hydratase/3-hydroxybutyryl-CoA epimerase</fullName>
            <ecNumber evidence="1">4.2.1.17</ecNumber>
            <ecNumber evidence="1">5.1.2.3</ecNumber>
        </recommendedName>
    </domain>
    <domain>
        <recommendedName>
            <fullName evidence="1">3-hydroxyacyl-CoA dehydrogenase</fullName>
            <ecNumber evidence="1">1.1.1.35</ecNumber>
        </recommendedName>
    </domain>
</protein>
<reference key="1">
    <citation type="journal article" date="2009" name="PLoS Genet.">
        <title>Organised genome dynamics in the Escherichia coli species results in highly diverse adaptive paths.</title>
        <authorList>
            <person name="Touchon M."/>
            <person name="Hoede C."/>
            <person name="Tenaillon O."/>
            <person name="Barbe V."/>
            <person name="Baeriswyl S."/>
            <person name="Bidet P."/>
            <person name="Bingen E."/>
            <person name="Bonacorsi S."/>
            <person name="Bouchier C."/>
            <person name="Bouvet O."/>
            <person name="Calteau A."/>
            <person name="Chiapello H."/>
            <person name="Clermont O."/>
            <person name="Cruveiller S."/>
            <person name="Danchin A."/>
            <person name="Diard M."/>
            <person name="Dossat C."/>
            <person name="Karoui M.E."/>
            <person name="Frapy E."/>
            <person name="Garry L."/>
            <person name="Ghigo J.M."/>
            <person name="Gilles A.M."/>
            <person name="Johnson J."/>
            <person name="Le Bouguenec C."/>
            <person name="Lescat M."/>
            <person name="Mangenot S."/>
            <person name="Martinez-Jehanne V."/>
            <person name="Matic I."/>
            <person name="Nassif X."/>
            <person name="Oztas S."/>
            <person name="Petit M.A."/>
            <person name="Pichon C."/>
            <person name="Rouy Z."/>
            <person name="Ruf C.S."/>
            <person name="Schneider D."/>
            <person name="Tourret J."/>
            <person name="Vacherie B."/>
            <person name="Vallenet D."/>
            <person name="Medigue C."/>
            <person name="Rocha E.P.C."/>
            <person name="Denamur E."/>
        </authorList>
    </citation>
    <scope>NUCLEOTIDE SEQUENCE [LARGE SCALE GENOMIC DNA]</scope>
    <source>
        <strain>UMN026 / ExPEC</strain>
    </source>
</reference>